<keyword id="KW-0997">Cell inner membrane</keyword>
<keyword id="KW-1003">Cell membrane</keyword>
<keyword id="KW-0472">Membrane</keyword>
<keyword id="KW-1185">Reference proteome</keyword>
<keyword id="KW-0812">Transmembrane</keyword>
<keyword id="KW-1133">Transmembrane helix</keyword>
<comment type="subcellular location">
    <subcellularLocation>
        <location>Cell inner membrane</location>
        <topology>Multi-pass membrane protein</topology>
    </subcellularLocation>
</comment>
<comment type="domain">
    <text evidence="3">The VTT domain was previously called the SNARE-assoc domain. As there is no evidence that this domain associates with SNARE proteins, it was renamed as VMP1, TMEM41, and TVP38 (VTT) domain.</text>
</comment>
<comment type="similarity">
    <text evidence="2">Belongs to the TVP38/TMEM64 family.</text>
</comment>
<proteinExistence type="evidence at protein level"/>
<name>YDJZ_ECOLI</name>
<accession>P76221</accession>
<accession>Q2MB37</accession>
<sequence length="235" mass="26160">MMMMQSRKIWYYRITLIILLFAMLLAWALLPGVHEFINRSVAAFAAVDQQGIERFIQSYGALAAVVSFLLMILQAIAAPLPAFLITFANASLFGAFWGGLLSWTSSMAGAALCFFIARVMGREVVEKLTGKTVLDSMDGFFTRYGKHTILVCRLLPFVPFDPISYAAGLTSIRFRSFFIATGLGQLPATIVYSWAGSMLTGGTFWFVTGLFILFALTVVIFMAKKIWLERQKRNA</sequence>
<reference key="1">
    <citation type="journal article" date="1997" name="Science">
        <title>The complete genome sequence of Escherichia coli K-12.</title>
        <authorList>
            <person name="Blattner F.R."/>
            <person name="Plunkett G. III"/>
            <person name="Bloch C.A."/>
            <person name="Perna N.T."/>
            <person name="Burland V."/>
            <person name="Riley M."/>
            <person name="Collado-Vides J."/>
            <person name="Glasner J.D."/>
            <person name="Rode C.K."/>
            <person name="Mayhew G.F."/>
            <person name="Gregor J."/>
            <person name="Davis N.W."/>
            <person name="Kirkpatrick H.A."/>
            <person name="Goeden M.A."/>
            <person name="Rose D.J."/>
            <person name="Mau B."/>
            <person name="Shao Y."/>
        </authorList>
    </citation>
    <scope>NUCLEOTIDE SEQUENCE [LARGE SCALE GENOMIC DNA]</scope>
    <source>
        <strain>K12 / MG1655 / ATCC 47076</strain>
    </source>
</reference>
<reference key="2">
    <citation type="journal article" date="2006" name="Mol. Syst. Biol.">
        <title>Highly accurate genome sequences of Escherichia coli K-12 strains MG1655 and W3110.</title>
        <authorList>
            <person name="Hayashi K."/>
            <person name="Morooka N."/>
            <person name="Yamamoto Y."/>
            <person name="Fujita K."/>
            <person name="Isono K."/>
            <person name="Choi S."/>
            <person name="Ohtsubo E."/>
            <person name="Baba T."/>
            <person name="Wanner B.L."/>
            <person name="Mori H."/>
            <person name="Horiuchi T."/>
        </authorList>
    </citation>
    <scope>NUCLEOTIDE SEQUENCE [LARGE SCALE GENOMIC DNA]</scope>
    <source>
        <strain>K12 / W3110 / ATCC 27325 / DSM 5911</strain>
    </source>
</reference>
<reference key="3">
    <citation type="journal article" date="2005" name="Science">
        <title>Global topology analysis of the Escherichia coli inner membrane proteome.</title>
        <authorList>
            <person name="Daley D.O."/>
            <person name="Rapp M."/>
            <person name="Granseth E."/>
            <person name="Melen K."/>
            <person name="Drew D."/>
            <person name="von Heijne G."/>
        </authorList>
    </citation>
    <scope>TOPOLOGY [LARGE SCALE ANALYSIS]</scope>
    <source>
        <strain>K12 / MG1655 / ATCC 47076</strain>
    </source>
</reference>
<reference key="4">
    <citation type="journal article" date="2018" name="J. Cell Biol.">
        <title>Genome-wide CRISPR screen identifies TMEM41B as a gene required for autophagosome formation.</title>
        <authorList>
            <person name="Morita K."/>
            <person name="Hama Y."/>
            <person name="Izume T."/>
            <person name="Tamura N."/>
            <person name="Ueno T."/>
            <person name="Yamashita Y."/>
            <person name="Sakamaki Y."/>
            <person name="Mimura K."/>
            <person name="Morishita H."/>
            <person name="Shihoya W."/>
            <person name="Nureki O."/>
            <person name="Mano H."/>
            <person name="Mizushima N."/>
        </authorList>
    </citation>
    <scope>REGION VTT DOMAIN</scope>
</reference>
<feature type="chain" id="PRO_0000198634" description="TVP38/TMEM64 family inner membrane protein YdjZ">
    <location>
        <begin position="1"/>
        <end position="235"/>
    </location>
</feature>
<feature type="topological domain" description="Periplasmic" evidence="1">
    <location>
        <begin position="1"/>
        <end position="13"/>
    </location>
</feature>
<feature type="transmembrane region" description="Helical" evidence="1">
    <location>
        <begin position="14"/>
        <end position="34"/>
    </location>
</feature>
<feature type="topological domain" description="Cytoplasmic" evidence="1">
    <location>
        <begin position="35"/>
        <end position="64"/>
    </location>
</feature>
<feature type="transmembrane region" description="Helical" evidence="1">
    <location>
        <begin position="65"/>
        <end position="85"/>
    </location>
</feature>
<feature type="topological domain" description="Periplasmic" evidence="1">
    <location>
        <begin position="86"/>
        <end position="95"/>
    </location>
</feature>
<feature type="transmembrane region" description="Helical" evidence="1">
    <location>
        <begin position="96"/>
        <end position="116"/>
    </location>
</feature>
<feature type="topological domain" description="Cytoplasmic" evidence="1">
    <location>
        <begin position="117"/>
        <end position="176"/>
    </location>
</feature>
<feature type="transmembrane region" description="Helical" evidence="1">
    <location>
        <begin position="177"/>
        <end position="197"/>
    </location>
</feature>
<feature type="topological domain" description="Periplasmic" evidence="1">
    <location>
        <begin position="198"/>
        <end position="202"/>
    </location>
</feature>
<feature type="transmembrane region" description="Helical" evidence="1">
    <location>
        <begin position="203"/>
        <end position="223"/>
    </location>
</feature>
<feature type="topological domain" description="Cytoplasmic" evidence="1">
    <location>
        <begin position="224"/>
        <end position="235"/>
    </location>
</feature>
<feature type="region of interest" description="VTT domain" evidence="3">
    <location>
        <begin position="90"/>
        <end position="199"/>
    </location>
</feature>
<evidence type="ECO:0000255" key="1"/>
<evidence type="ECO:0000305" key="2"/>
<evidence type="ECO:0000305" key="3">
    <source>
    </source>
</evidence>
<gene>
    <name type="primary">ydjZ</name>
    <name type="ordered locus">b1752</name>
    <name type="ordered locus">JW1741</name>
</gene>
<organism>
    <name type="scientific">Escherichia coli (strain K12)</name>
    <dbReference type="NCBI Taxonomy" id="83333"/>
    <lineage>
        <taxon>Bacteria</taxon>
        <taxon>Pseudomonadati</taxon>
        <taxon>Pseudomonadota</taxon>
        <taxon>Gammaproteobacteria</taxon>
        <taxon>Enterobacterales</taxon>
        <taxon>Enterobacteriaceae</taxon>
        <taxon>Escherichia</taxon>
    </lineage>
</organism>
<dbReference type="EMBL" id="U00096">
    <property type="protein sequence ID" value="AAC74822.1"/>
    <property type="molecule type" value="Genomic_DNA"/>
</dbReference>
<dbReference type="EMBL" id="AP009048">
    <property type="protein sequence ID" value="BAE76519.1"/>
    <property type="molecule type" value="Genomic_DNA"/>
</dbReference>
<dbReference type="PIR" id="H64934">
    <property type="entry name" value="H64934"/>
</dbReference>
<dbReference type="RefSeq" id="NP_416266.1">
    <property type="nucleotide sequence ID" value="NC_000913.3"/>
</dbReference>
<dbReference type="RefSeq" id="WP_000980098.1">
    <property type="nucleotide sequence ID" value="NZ_SSZK01000001.1"/>
</dbReference>
<dbReference type="BioGRID" id="4259418">
    <property type="interactions" value="9"/>
</dbReference>
<dbReference type="FunCoup" id="P76221">
    <property type="interactions" value="181"/>
</dbReference>
<dbReference type="STRING" id="511145.b1752"/>
<dbReference type="TCDB" id="9.B.27.1.2">
    <property type="family name" value="the death effector domain a (deda) family"/>
</dbReference>
<dbReference type="PaxDb" id="511145-b1752"/>
<dbReference type="DNASU" id="946269"/>
<dbReference type="EnsemblBacteria" id="AAC74822">
    <property type="protein sequence ID" value="AAC74822"/>
    <property type="gene ID" value="b1752"/>
</dbReference>
<dbReference type="GeneID" id="946269"/>
<dbReference type="KEGG" id="ecj:JW1741"/>
<dbReference type="KEGG" id="eco:b1752"/>
<dbReference type="KEGG" id="ecoc:C3026_10005"/>
<dbReference type="PATRIC" id="fig|1411691.4.peg.503"/>
<dbReference type="EchoBASE" id="EB3758"/>
<dbReference type="eggNOG" id="COG0398">
    <property type="taxonomic scope" value="Bacteria"/>
</dbReference>
<dbReference type="HOGENOM" id="CLU_038944_8_0_6"/>
<dbReference type="InParanoid" id="P76221"/>
<dbReference type="OMA" id="WVERHGF"/>
<dbReference type="OrthoDB" id="9812980at2"/>
<dbReference type="PhylomeDB" id="P76221"/>
<dbReference type="BioCyc" id="EcoCyc:G6947-MONOMER"/>
<dbReference type="PRO" id="PR:P76221"/>
<dbReference type="Proteomes" id="UP000000625">
    <property type="component" value="Chromosome"/>
</dbReference>
<dbReference type="GO" id="GO:0005886">
    <property type="term" value="C:plasma membrane"/>
    <property type="evidence" value="ECO:0000314"/>
    <property type="project" value="EcoCyc"/>
</dbReference>
<dbReference type="InterPro" id="IPR015414">
    <property type="entry name" value="TMEM64"/>
</dbReference>
<dbReference type="InterPro" id="IPR032816">
    <property type="entry name" value="VTT_dom"/>
</dbReference>
<dbReference type="PANTHER" id="PTHR12677">
    <property type="entry name" value="GOLGI APPARATUS MEMBRANE PROTEIN TVP38-RELATED"/>
    <property type="match status" value="1"/>
</dbReference>
<dbReference type="PANTHER" id="PTHR12677:SF59">
    <property type="entry name" value="GOLGI APPARATUS MEMBRANE PROTEIN TVP38-RELATED"/>
    <property type="match status" value="1"/>
</dbReference>
<dbReference type="Pfam" id="PF09335">
    <property type="entry name" value="VTT_dom"/>
    <property type="match status" value="1"/>
</dbReference>
<protein>
    <recommendedName>
        <fullName>TVP38/TMEM64 family inner membrane protein YdjZ</fullName>
    </recommendedName>
</protein>